<proteinExistence type="evidence at transcript level"/>
<comment type="function">
    <text evidence="1">The small GTPases Rab are key regulators of intracellular membrane trafficking, from the formation of transport vesicles to their fusion with membranes. Rabs cycle between an inactive GDP-bound form and an active GTP-bound form that is able to recruit to membranes different sets of downstream effectors directly responsible for vesicle formation, movement, tethering and fusion.</text>
</comment>
<comment type="catalytic activity">
    <reaction evidence="1">
        <text>GTP + H2O = GDP + phosphate + H(+)</text>
        <dbReference type="Rhea" id="RHEA:19669"/>
        <dbReference type="ChEBI" id="CHEBI:15377"/>
        <dbReference type="ChEBI" id="CHEBI:15378"/>
        <dbReference type="ChEBI" id="CHEBI:37565"/>
        <dbReference type="ChEBI" id="CHEBI:43474"/>
        <dbReference type="ChEBI" id="CHEBI:58189"/>
        <dbReference type="EC" id="3.6.5.2"/>
    </reaction>
    <physiologicalReaction direction="left-to-right" evidence="1">
        <dbReference type="Rhea" id="RHEA:19670"/>
    </physiologicalReaction>
</comment>
<comment type="cofactor">
    <cofactor evidence="1">
        <name>Mg(2+)</name>
        <dbReference type="ChEBI" id="CHEBI:18420"/>
    </cofactor>
</comment>
<comment type="activity regulation">
    <text evidence="4">Regulated by guanine nucleotide exchange factors (GEFs) which promote the exchange of bound GDP for free GTP (Probable). Regulated by GTPase activating proteins (GAPs) which increase the GTP hydrolysis activity (Probable). Inhibited by GDP dissociation inhibitors (GDIs) (Probable).</text>
</comment>
<comment type="subunit">
    <text evidence="2">Interacts with EEA1 and INCA1 (By similarity). Interacts with GDI1, GDI2, CHML and CHM; phosphorylation at Ser-85 disrupts this interaction (By similarity).</text>
</comment>
<comment type="subcellular location">
    <subcellularLocation>
        <location evidence="1">Cell membrane</location>
        <topology evidence="1">Lipid-anchor</topology>
        <orientation evidence="1">Cytoplasmic side</orientation>
    </subcellularLocation>
    <subcellularLocation>
        <location evidence="1">Early endosome membrane</location>
        <topology evidence="1">Lipid-anchor</topology>
    </subcellularLocation>
    <subcellularLocation>
        <location evidence="2">Melanosome</location>
    </subcellularLocation>
</comment>
<comment type="domain">
    <text evidence="1">Switch 1, switch 2 and the interswitch regions are characteristic of Rab GTPases and mediate the interactions with Rab downstream effectors. The switch regions undergo conformational changes upon nucleotide binding which drive interaction with specific sets of effector proteins, with most effectors only binding to GTP-bound Rab.</text>
</comment>
<comment type="PTM">
    <text evidence="2">Phosphorylation of Ser-85 in the switch II region by LRRK2 prevents the association of RAB regulatory proteins, including CHM, CHML and RAB GDP dissociation inhibitors GDI1 and GDI2.</text>
</comment>
<comment type="similarity">
    <text evidence="4">Belongs to the small GTPase superfamily. Rab family.</text>
</comment>
<organism>
    <name type="scientific">Pongo abelii</name>
    <name type="common">Sumatran orangutan</name>
    <name type="synonym">Pongo pygmaeus abelii</name>
    <dbReference type="NCBI Taxonomy" id="9601"/>
    <lineage>
        <taxon>Eukaryota</taxon>
        <taxon>Metazoa</taxon>
        <taxon>Chordata</taxon>
        <taxon>Craniata</taxon>
        <taxon>Vertebrata</taxon>
        <taxon>Euteleostomi</taxon>
        <taxon>Mammalia</taxon>
        <taxon>Eutheria</taxon>
        <taxon>Euarchontoglires</taxon>
        <taxon>Primates</taxon>
        <taxon>Haplorrhini</taxon>
        <taxon>Catarrhini</taxon>
        <taxon>Hominidae</taxon>
        <taxon>Pongo</taxon>
    </lineage>
</organism>
<name>RAB5C_PONAB</name>
<evidence type="ECO:0000250" key="1">
    <source>
        <dbReference type="UniProtKB" id="P20339"/>
    </source>
</evidence>
<evidence type="ECO:0000250" key="2">
    <source>
        <dbReference type="UniProtKB" id="P51148"/>
    </source>
</evidence>
<evidence type="ECO:0000256" key="3">
    <source>
        <dbReference type="SAM" id="MobiDB-lite"/>
    </source>
</evidence>
<evidence type="ECO:0000305" key="4"/>
<sequence length="216" mass="23483">MAGRGGAARPNGPAAGNKICQFKLVLLGESAVGKSSLVLRFVKGQFHEYQESTIGAAFLTQTVCLDDTTVKFEIWDTAGQERYHSLAPMYYRGAQAAIVVYDITNTDTFARAKNWVKELQRQASPNIVIALAGNKADLASKRAVEFQEAQAYADDNSLLFMETSAKTAMNVNEIFMAIAKKLPKNEPQNATGAPGRNRGVDLQENNPASRSQCCSN</sequence>
<keyword id="KW-1003">Cell membrane</keyword>
<keyword id="KW-0967">Endosome</keyword>
<keyword id="KW-0342">GTP-binding</keyword>
<keyword id="KW-0378">Hydrolase</keyword>
<keyword id="KW-0449">Lipoprotein</keyword>
<keyword id="KW-0460">Magnesium</keyword>
<keyword id="KW-0472">Membrane</keyword>
<keyword id="KW-0479">Metal-binding</keyword>
<keyword id="KW-0547">Nucleotide-binding</keyword>
<keyword id="KW-0597">Phosphoprotein</keyword>
<keyword id="KW-0636">Prenylation</keyword>
<keyword id="KW-0653">Protein transport</keyword>
<keyword id="KW-1185">Reference proteome</keyword>
<keyword id="KW-0813">Transport</keyword>
<dbReference type="EC" id="3.6.5.2" evidence="1"/>
<dbReference type="EMBL" id="CR860097">
    <property type="protein sequence ID" value="CAH92243.1"/>
    <property type="molecule type" value="mRNA"/>
</dbReference>
<dbReference type="RefSeq" id="NP_001127529.1">
    <property type="nucleotide sequence ID" value="NM_001134057.1"/>
</dbReference>
<dbReference type="RefSeq" id="XP_054402214.1">
    <property type="nucleotide sequence ID" value="XM_054546239.2"/>
</dbReference>
<dbReference type="RefSeq" id="XP_054402215.1">
    <property type="nucleotide sequence ID" value="XM_054546240.2"/>
</dbReference>
<dbReference type="RefSeq" id="XP_054402216.1">
    <property type="nucleotide sequence ID" value="XM_054546241.2"/>
</dbReference>
<dbReference type="SMR" id="Q5R7L7"/>
<dbReference type="FunCoup" id="Q5R7L7">
    <property type="interactions" value="3309"/>
</dbReference>
<dbReference type="STRING" id="9601.ENSPPYP00000009444"/>
<dbReference type="Ensembl" id="ENSPPYT00000059225.1">
    <property type="protein sequence ID" value="ENSPPYP00000039797.1"/>
    <property type="gene ID" value="ENSPPYG00000008398.3"/>
</dbReference>
<dbReference type="GeneID" id="100174605"/>
<dbReference type="KEGG" id="pon:100174605"/>
<dbReference type="CTD" id="5878"/>
<dbReference type="eggNOG" id="KOG0092">
    <property type="taxonomic scope" value="Eukaryota"/>
</dbReference>
<dbReference type="GeneTree" id="ENSGT00940000154971"/>
<dbReference type="HOGENOM" id="CLU_041217_10_2_1"/>
<dbReference type="InParanoid" id="Q5R7L7"/>
<dbReference type="OMA" id="GGPNKTC"/>
<dbReference type="OrthoDB" id="63533at2759"/>
<dbReference type="TreeFam" id="TF300199"/>
<dbReference type="Proteomes" id="UP000001595">
    <property type="component" value="Chromosome 17"/>
</dbReference>
<dbReference type="GO" id="GO:0031901">
    <property type="term" value="C:early endosome membrane"/>
    <property type="evidence" value="ECO:0007669"/>
    <property type="project" value="UniProtKB-SubCell"/>
</dbReference>
<dbReference type="GO" id="GO:0042470">
    <property type="term" value="C:melanosome"/>
    <property type="evidence" value="ECO:0007669"/>
    <property type="project" value="UniProtKB-SubCell"/>
</dbReference>
<dbReference type="GO" id="GO:0005886">
    <property type="term" value="C:plasma membrane"/>
    <property type="evidence" value="ECO:0007669"/>
    <property type="project" value="UniProtKB-SubCell"/>
</dbReference>
<dbReference type="GO" id="GO:0003925">
    <property type="term" value="F:G protein activity"/>
    <property type="evidence" value="ECO:0007669"/>
    <property type="project" value="UniProtKB-EC"/>
</dbReference>
<dbReference type="GO" id="GO:0019003">
    <property type="term" value="F:GDP binding"/>
    <property type="evidence" value="ECO:0000250"/>
    <property type="project" value="UniProtKB"/>
</dbReference>
<dbReference type="GO" id="GO:0005525">
    <property type="term" value="F:GTP binding"/>
    <property type="evidence" value="ECO:0007669"/>
    <property type="project" value="UniProtKB-KW"/>
</dbReference>
<dbReference type="GO" id="GO:0015031">
    <property type="term" value="P:protein transport"/>
    <property type="evidence" value="ECO:0007669"/>
    <property type="project" value="UniProtKB-KW"/>
</dbReference>
<dbReference type="CDD" id="cd01860">
    <property type="entry name" value="Rab5_related"/>
    <property type="match status" value="1"/>
</dbReference>
<dbReference type="FunFam" id="3.40.50.300:FF:000180">
    <property type="entry name" value="Member RAS oncogene family"/>
    <property type="match status" value="1"/>
</dbReference>
<dbReference type="Gene3D" id="3.40.50.300">
    <property type="entry name" value="P-loop containing nucleotide triphosphate hydrolases"/>
    <property type="match status" value="1"/>
</dbReference>
<dbReference type="InterPro" id="IPR027417">
    <property type="entry name" value="P-loop_NTPase"/>
</dbReference>
<dbReference type="InterPro" id="IPR005225">
    <property type="entry name" value="Small_GTP-bd"/>
</dbReference>
<dbReference type="InterPro" id="IPR001806">
    <property type="entry name" value="Small_GTPase"/>
</dbReference>
<dbReference type="NCBIfam" id="TIGR00231">
    <property type="entry name" value="small_GTP"/>
    <property type="match status" value="1"/>
</dbReference>
<dbReference type="PANTHER" id="PTHR47978">
    <property type="match status" value="1"/>
</dbReference>
<dbReference type="Pfam" id="PF00071">
    <property type="entry name" value="Ras"/>
    <property type="match status" value="1"/>
</dbReference>
<dbReference type="PRINTS" id="PR00449">
    <property type="entry name" value="RASTRNSFRMNG"/>
</dbReference>
<dbReference type="SMART" id="SM00175">
    <property type="entry name" value="RAB"/>
    <property type="match status" value="1"/>
</dbReference>
<dbReference type="SMART" id="SM00176">
    <property type="entry name" value="RAN"/>
    <property type="match status" value="1"/>
</dbReference>
<dbReference type="SMART" id="SM00173">
    <property type="entry name" value="RAS"/>
    <property type="match status" value="1"/>
</dbReference>
<dbReference type="SMART" id="SM00174">
    <property type="entry name" value="RHO"/>
    <property type="match status" value="1"/>
</dbReference>
<dbReference type="SUPFAM" id="SSF52540">
    <property type="entry name" value="P-loop containing nucleoside triphosphate hydrolases"/>
    <property type="match status" value="1"/>
</dbReference>
<dbReference type="PROSITE" id="PS51419">
    <property type="entry name" value="RAB"/>
    <property type="match status" value="1"/>
</dbReference>
<accession>Q5R7L7</accession>
<reference key="1">
    <citation type="submission" date="2004-11" db="EMBL/GenBank/DDBJ databases">
        <authorList>
            <consortium name="The German cDNA consortium"/>
        </authorList>
    </citation>
    <scope>NUCLEOTIDE SEQUENCE [LARGE SCALE MRNA]</scope>
    <source>
        <tissue>Heart</tissue>
    </source>
</reference>
<feature type="chain" id="PRO_0000276768" description="Ras-related protein Rab-5C">
    <location>
        <begin position="1"/>
        <end position="216"/>
    </location>
</feature>
<feature type="region of interest" description="Disordered" evidence="3">
    <location>
        <begin position="185"/>
        <end position="216"/>
    </location>
</feature>
<feature type="short sequence motif" description="Switch 1" evidence="1">
    <location>
        <begin position="45"/>
        <end position="57"/>
    </location>
</feature>
<feature type="short sequence motif" description="Switch 2" evidence="1">
    <location>
        <begin position="78"/>
        <end position="94"/>
    </location>
</feature>
<feature type="compositionally biased region" description="Polar residues" evidence="3">
    <location>
        <begin position="203"/>
        <end position="216"/>
    </location>
</feature>
<feature type="binding site" evidence="1">
    <location>
        <position position="30"/>
    </location>
    <ligand>
        <name>GTP</name>
        <dbReference type="ChEBI" id="CHEBI:37565"/>
    </ligand>
</feature>
<feature type="binding site" evidence="1">
    <location>
        <position position="31"/>
    </location>
    <ligand>
        <name>GTP</name>
        <dbReference type="ChEBI" id="CHEBI:37565"/>
    </ligand>
</feature>
<feature type="binding site" evidence="1">
    <location>
        <position position="33"/>
    </location>
    <ligand>
        <name>GTP</name>
        <dbReference type="ChEBI" id="CHEBI:37565"/>
    </ligand>
</feature>
<feature type="binding site" evidence="1">
    <location>
        <position position="34"/>
    </location>
    <ligand>
        <name>GTP</name>
        <dbReference type="ChEBI" id="CHEBI:37565"/>
    </ligand>
</feature>
<feature type="binding site" evidence="1">
    <location>
        <position position="35"/>
    </location>
    <ligand>
        <name>GTP</name>
        <dbReference type="ChEBI" id="CHEBI:37565"/>
    </ligand>
</feature>
<feature type="binding site" evidence="1">
    <location>
        <position position="35"/>
    </location>
    <ligand>
        <name>Mg(2+)</name>
        <dbReference type="ChEBI" id="CHEBI:18420"/>
    </ligand>
</feature>
<feature type="binding site" evidence="1">
    <location>
        <position position="36"/>
    </location>
    <ligand>
        <name>GTP</name>
        <dbReference type="ChEBI" id="CHEBI:37565"/>
    </ligand>
</feature>
<feature type="binding site" evidence="1">
    <location>
        <position position="47"/>
    </location>
    <ligand>
        <name>GTP</name>
        <dbReference type="ChEBI" id="CHEBI:37565"/>
    </ligand>
</feature>
<feature type="binding site" evidence="1">
    <location>
        <position position="48"/>
    </location>
    <ligand>
        <name>GTP</name>
        <dbReference type="ChEBI" id="CHEBI:37565"/>
    </ligand>
</feature>
<feature type="binding site" evidence="1">
    <location>
        <position position="53"/>
    </location>
    <ligand>
        <name>GTP</name>
        <dbReference type="ChEBI" id="CHEBI:37565"/>
    </ligand>
</feature>
<feature type="binding site" evidence="1">
    <location>
        <position position="53"/>
    </location>
    <ligand>
        <name>Mg(2+)</name>
        <dbReference type="ChEBI" id="CHEBI:18420"/>
    </ligand>
</feature>
<feature type="binding site" evidence="1">
    <location>
        <position position="79"/>
    </location>
    <ligand>
        <name>GTP</name>
        <dbReference type="ChEBI" id="CHEBI:37565"/>
    </ligand>
</feature>
<feature type="binding site" evidence="1">
    <location>
        <position position="134"/>
    </location>
    <ligand>
        <name>GTP</name>
        <dbReference type="ChEBI" id="CHEBI:37565"/>
    </ligand>
</feature>
<feature type="binding site" evidence="1">
    <location>
        <position position="135"/>
    </location>
    <ligand>
        <name>GTP</name>
        <dbReference type="ChEBI" id="CHEBI:37565"/>
    </ligand>
</feature>
<feature type="binding site" evidence="1">
    <location>
        <position position="137"/>
    </location>
    <ligand>
        <name>GTP</name>
        <dbReference type="ChEBI" id="CHEBI:37565"/>
    </ligand>
</feature>
<feature type="binding site" evidence="1">
    <location>
        <position position="165"/>
    </location>
    <ligand>
        <name>GTP</name>
        <dbReference type="ChEBI" id="CHEBI:37565"/>
    </ligand>
</feature>
<feature type="binding site" evidence="1">
    <location>
        <position position="166"/>
    </location>
    <ligand>
        <name>GTP</name>
        <dbReference type="ChEBI" id="CHEBI:37565"/>
    </ligand>
</feature>
<feature type="modified residue" description="Phosphoserine" evidence="2">
    <location>
        <position position="85"/>
    </location>
</feature>
<feature type="lipid moiety-binding region" description="S-geranylgeranyl cysteine" evidence="1">
    <location>
        <position position="213"/>
    </location>
</feature>
<feature type="lipid moiety-binding region" description="S-geranylgeranyl cysteine" evidence="1">
    <location>
        <position position="214"/>
    </location>
</feature>
<protein>
    <recommendedName>
        <fullName>Ras-related protein Rab-5C</fullName>
        <ecNumber evidence="1">3.6.5.2</ecNumber>
    </recommendedName>
</protein>
<gene>
    <name type="primary">RAB5C</name>
</gene>